<protein>
    <recommendedName>
        <fullName evidence="1">Undecaprenyl phosphate-alpha-4-amino-4-deoxy-L-arabinose arabinosyl transferase</fullName>
        <ecNumber evidence="1">2.4.2.43</ecNumber>
    </recommendedName>
    <alternativeName>
        <fullName evidence="1">4-amino-4-deoxy-L-arabinose lipid A transferase</fullName>
    </alternativeName>
    <alternativeName>
        <fullName evidence="1">Lipid IV(A) 4-amino-4-deoxy-L-arabinosyltransferase</fullName>
    </alternativeName>
    <alternativeName>
        <fullName evidence="1">Undecaprenyl phosphate-alpha-L-Ara4N transferase</fullName>
    </alternativeName>
</protein>
<dbReference type="EC" id="2.4.2.43" evidence="1"/>
<dbReference type="EMBL" id="CP001657">
    <property type="protein sequence ID" value="ACT13947.1"/>
    <property type="molecule type" value="Genomic_DNA"/>
</dbReference>
<dbReference type="RefSeq" id="WP_015841103.1">
    <property type="nucleotide sequence ID" value="NC_012917.1"/>
</dbReference>
<dbReference type="SMR" id="C6DAW3"/>
<dbReference type="STRING" id="561230.PC1_2924"/>
<dbReference type="CAZy" id="GT83">
    <property type="family name" value="Glycosyltransferase Family 83"/>
</dbReference>
<dbReference type="KEGG" id="pct:PC1_2924"/>
<dbReference type="eggNOG" id="COG1807">
    <property type="taxonomic scope" value="Bacteria"/>
</dbReference>
<dbReference type="HOGENOM" id="CLU_019200_2_1_6"/>
<dbReference type="OrthoDB" id="9775035at2"/>
<dbReference type="UniPathway" id="UPA00037"/>
<dbReference type="Proteomes" id="UP000002736">
    <property type="component" value="Chromosome"/>
</dbReference>
<dbReference type="GO" id="GO:0005886">
    <property type="term" value="C:plasma membrane"/>
    <property type="evidence" value="ECO:0007669"/>
    <property type="project" value="UniProtKB-SubCell"/>
</dbReference>
<dbReference type="GO" id="GO:0103015">
    <property type="term" value="F:4-amino-4-deoxy-L-arabinose transferase activity"/>
    <property type="evidence" value="ECO:0007669"/>
    <property type="project" value="UniProtKB-EC"/>
</dbReference>
<dbReference type="GO" id="GO:0000030">
    <property type="term" value="F:mannosyltransferase activity"/>
    <property type="evidence" value="ECO:0007669"/>
    <property type="project" value="InterPro"/>
</dbReference>
<dbReference type="GO" id="GO:0009245">
    <property type="term" value="P:lipid A biosynthetic process"/>
    <property type="evidence" value="ECO:0007669"/>
    <property type="project" value="UniProtKB-UniRule"/>
</dbReference>
<dbReference type="GO" id="GO:0009103">
    <property type="term" value="P:lipopolysaccharide biosynthetic process"/>
    <property type="evidence" value="ECO:0007669"/>
    <property type="project" value="UniProtKB-KW"/>
</dbReference>
<dbReference type="GO" id="GO:0006493">
    <property type="term" value="P:protein O-linked glycosylation"/>
    <property type="evidence" value="ECO:0007669"/>
    <property type="project" value="InterPro"/>
</dbReference>
<dbReference type="GO" id="GO:0010041">
    <property type="term" value="P:response to iron(III) ion"/>
    <property type="evidence" value="ECO:0007669"/>
    <property type="project" value="TreeGrafter"/>
</dbReference>
<dbReference type="HAMAP" id="MF_01165">
    <property type="entry name" value="ArnT_transfer"/>
    <property type="match status" value="1"/>
</dbReference>
<dbReference type="InterPro" id="IPR022839">
    <property type="entry name" value="ArnT_tfrase"/>
</dbReference>
<dbReference type="InterPro" id="IPR003342">
    <property type="entry name" value="Glyco_trans_39/83"/>
</dbReference>
<dbReference type="InterPro" id="IPR050297">
    <property type="entry name" value="LipidA_mod_glycosyltrf_83"/>
</dbReference>
<dbReference type="NCBIfam" id="NF009784">
    <property type="entry name" value="PRK13279.1"/>
    <property type="match status" value="1"/>
</dbReference>
<dbReference type="PANTHER" id="PTHR33908">
    <property type="entry name" value="MANNOSYLTRANSFERASE YKCB-RELATED"/>
    <property type="match status" value="1"/>
</dbReference>
<dbReference type="PANTHER" id="PTHR33908:SF3">
    <property type="entry name" value="UNDECAPRENYL PHOSPHATE-ALPHA-4-AMINO-4-DEOXY-L-ARABINOSE ARABINOSYL TRANSFERASE"/>
    <property type="match status" value="1"/>
</dbReference>
<dbReference type="Pfam" id="PF02366">
    <property type="entry name" value="PMT"/>
    <property type="match status" value="1"/>
</dbReference>
<evidence type="ECO:0000255" key="1">
    <source>
        <dbReference type="HAMAP-Rule" id="MF_01165"/>
    </source>
</evidence>
<gene>
    <name evidence="1" type="primary">arnT</name>
    <name type="ordered locus">PC1_2924</name>
</gene>
<sequence length="556" mass="62388">MEKGMIKLKSTVILVLFALLYLLPLNGRWLWSPDETRYAEISREMLQRGDWIVPHLLDVRYFEKPVAGYWLNNISQWLLGHTNFSVRFASVFSTALSALLVFWLALLLWKNRRTALLAATIYLTSLLVYGIGTYSVLDPMVTLWMTAALFSHVLIQRATLTRERLMAWGLMGLACGMGFMTKGFLALALPVISVLPVALAQKRIKELLLFGPLAIVVAVLLSAPWALAVHAREADYWHYFFWIEHIQRFAEDDAQHNAPFWYYLPVLIVGTFPWLALLPGALRSGWAERKSSPERFLLLCWMVMPLLFFSIAKGKLLTYILPCFAPLALLMAAWISGLAPAVRDRLLRINSWLNLAFGSVLALAVAALGLGIIMPHLYQPGEGLTIVSGVVCFVGWVAFAAVSLKKSRSWGYLVAGCPLFLALLVGGSIPASVVDSKNPQTFIRSHQPLLEDSRYVLSDEVGLAAGLAWELKRSDITLFKARGELNYGLNYADAADRFVDEGAFPAWLAEKRRSGNVALVLKIDRDTDEEYRNLPAPDQLKKSHRYVLLFYKQIAP</sequence>
<name>ARNT_PECCP</name>
<reference key="1">
    <citation type="submission" date="2009-07" db="EMBL/GenBank/DDBJ databases">
        <title>Complete sequence of Pectobacterium carotovorum subsp. carotovorum PC1.</title>
        <authorList>
            <consortium name="US DOE Joint Genome Institute"/>
            <person name="Lucas S."/>
            <person name="Copeland A."/>
            <person name="Lapidus A."/>
            <person name="Glavina del Rio T."/>
            <person name="Tice H."/>
            <person name="Bruce D."/>
            <person name="Goodwin L."/>
            <person name="Pitluck S."/>
            <person name="Munk A.C."/>
            <person name="Brettin T."/>
            <person name="Detter J.C."/>
            <person name="Han C."/>
            <person name="Tapia R."/>
            <person name="Larimer F."/>
            <person name="Land M."/>
            <person name="Hauser L."/>
            <person name="Kyrpides N."/>
            <person name="Mikhailova N."/>
            <person name="Balakrishnan V."/>
            <person name="Glasner J."/>
            <person name="Perna N.T."/>
        </authorList>
    </citation>
    <scope>NUCLEOTIDE SEQUENCE [LARGE SCALE GENOMIC DNA]</scope>
    <source>
        <strain>PC1</strain>
    </source>
</reference>
<comment type="function">
    <text evidence="1">Catalyzes the transfer of the L-Ara4N moiety of the glycolipid undecaprenyl phosphate-alpha-L-Ara4N to lipid A. The modified arabinose is attached to lipid A and is required for resistance to polymyxin and cationic antimicrobial peptides.</text>
</comment>
<comment type="catalytic activity">
    <reaction evidence="1">
        <text>4-amino-4-deoxy-alpha-L-arabinopyranosyl di-trans,octa-cis-undecaprenyl phosphate + lipid IVA = lipid IIA + di-trans,octa-cis-undecaprenyl phosphate.</text>
        <dbReference type="EC" id="2.4.2.43"/>
    </reaction>
</comment>
<comment type="pathway">
    <text evidence="1">Lipopolysaccharide metabolism; 4-amino-4-deoxy-beta-L-arabinose-lipid A biosynthesis.</text>
</comment>
<comment type="subcellular location">
    <subcellularLocation>
        <location evidence="1">Cell inner membrane</location>
        <topology evidence="1">Multi-pass membrane protein</topology>
    </subcellularLocation>
</comment>
<comment type="similarity">
    <text evidence="1">Belongs to the glycosyltransferase 83 family.</text>
</comment>
<accession>C6DAW3</accession>
<feature type="chain" id="PRO_1000213728" description="Undecaprenyl phosphate-alpha-4-amino-4-deoxy-L-arabinose arabinosyl transferase">
    <location>
        <begin position="1"/>
        <end position="556"/>
    </location>
</feature>
<feature type="transmembrane region" description="Helical" evidence="1">
    <location>
        <begin position="5"/>
        <end position="25"/>
    </location>
</feature>
<feature type="transmembrane region" description="Helical" evidence="1">
    <location>
        <begin position="88"/>
        <end position="108"/>
    </location>
</feature>
<feature type="transmembrane region" description="Helical" evidence="1">
    <location>
        <begin position="116"/>
        <end position="136"/>
    </location>
</feature>
<feature type="transmembrane region" description="Helical" evidence="1">
    <location>
        <begin position="179"/>
        <end position="199"/>
    </location>
</feature>
<feature type="transmembrane region" description="Helical" evidence="1">
    <location>
        <begin position="207"/>
        <end position="227"/>
    </location>
</feature>
<feature type="transmembrane region" description="Helical" evidence="1">
    <location>
        <begin position="258"/>
        <end position="278"/>
    </location>
</feature>
<feature type="transmembrane region" description="Helical" evidence="1">
    <location>
        <begin position="296"/>
        <end position="316"/>
    </location>
</feature>
<feature type="transmembrane region" description="Helical" evidence="1">
    <location>
        <begin position="319"/>
        <end position="339"/>
    </location>
</feature>
<feature type="transmembrane region" description="Helical" evidence="1">
    <location>
        <begin position="355"/>
        <end position="375"/>
    </location>
</feature>
<feature type="transmembrane region" description="Helical" evidence="1">
    <location>
        <begin position="384"/>
        <end position="404"/>
    </location>
</feature>
<feature type="transmembrane region" description="Helical" evidence="1">
    <location>
        <begin position="410"/>
        <end position="430"/>
    </location>
</feature>
<proteinExistence type="inferred from homology"/>
<organism>
    <name type="scientific">Pectobacterium carotovorum subsp. carotovorum (strain PC1)</name>
    <dbReference type="NCBI Taxonomy" id="561230"/>
    <lineage>
        <taxon>Bacteria</taxon>
        <taxon>Pseudomonadati</taxon>
        <taxon>Pseudomonadota</taxon>
        <taxon>Gammaproteobacteria</taxon>
        <taxon>Enterobacterales</taxon>
        <taxon>Pectobacteriaceae</taxon>
        <taxon>Pectobacterium</taxon>
    </lineage>
</organism>
<keyword id="KW-0997">Cell inner membrane</keyword>
<keyword id="KW-1003">Cell membrane</keyword>
<keyword id="KW-0328">Glycosyltransferase</keyword>
<keyword id="KW-0441">Lipid A biosynthesis</keyword>
<keyword id="KW-0444">Lipid biosynthesis</keyword>
<keyword id="KW-0443">Lipid metabolism</keyword>
<keyword id="KW-0448">Lipopolysaccharide biosynthesis</keyword>
<keyword id="KW-0472">Membrane</keyword>
<keyword id="KW-0808">Transferase</keyword>
<keyword id="KW-0812">Transmembrane</keyword>
<keyword id="KW-1133">Transmembrane helix</keyword>